<reference key="1">
    <citation type="journal article" date="2007" name="Nat. Biotechnol.">
        <title>Complete genome sequence of the erythromycin-producing bacterium Saccharopolyspora erythraea NRRL23338.</title>
        <authorList>
            <person name="Oliynyk M."/>
            <person name="Samborskyy M."/>
            <person name="Lester J.B."/>
            <person name="Mironenko T."/>
            <person name="Scott N."/>
            <person name="Dickens S."/>
            <person name="Haydock S.F."/>
            <person name="Leadlay P.F."/>
        </authorList>
    </citation>
    <scope>NUCLEOTIDE SEQUENCE [LARGE SCALE GENOMIC DNA]</scope>
    <source>
        <strain>ATCC 11635 / DSM 40517 / JCM 4748 / NBRC 13426 / NCIMB 8594 / NRRL 2338</strain>
    </source>
</reference>
<sequence>MKIILTADVTGLGESGDIVEVKDGYARNLLLPRGLAIVATKGAQKQVETIRRTQEAKRVRNLEHAQELKQQLQGLGAVTLTAKVSKQGKLFGSITAADIVSAVRKAGGPNLDKRSVDTRGHIKSLGKHAVDVRLHPDVKASVSVQISAAS</sequence>
<comment type="function">
    <text evidence="1">Binds to the 23S rRNA.</text>
</comment>
<comment type="similarity">
    <text evidence="1">Belongs to the bacterial ribosomal protein bL9 family.</text>
</comment>
<proteinExistence type="inferred from homology"/>
<protein>
    <recommendedName>
        <fullName evidence="1">Large ribosomal subunit protein bL9</fullName>
    </recommendedName>
    <alternativeName>
        <fullName evidence="2">50S ribosomal protein L9</fullName>
    </alternativeName>
</protein>
<feature type="chain" id="PRO_1000014853" description="Large ribosomal subunit protein bL9">
    <location>
        <begin position="1"/>
        <end position="150"/>
    </location>
</feature>
<accession>A4FR29</accession>
<gene>
    <name evidence="1" type="primary">rplI</name>
    <name type="ordered locus">SACE_7348</name>
</gene>
<dbReference type="EMBL" id="AM420293">
    <property type="protein sequence ID" value="CAM06504.1"/>
    <property type="molecule type" value="Genomic_DNA"/>
</dbReference>
<dbReference type="RefSeq" id="WP_009948342.1">
    <property type="nucleotide sequence ID" value="NC_009142.1"/>
</dbReference>
<dbReference type="SMR" id="A4FR29"/>
<dbReference type="STRING" id="405948.SACE_7348"/>
<dbReference type="KEGG" id="sen:SACE_7348"/>
<dbReference type="eggNOG" id="COG0359">
    <property type="taxonomic scope" value="Bacteria"/>
</dbReference>
<dbReference type="HOGENOM" id="CLU_078938_5_1_11"/>
<dbReference type="OrthoDB" id="9788336at2"/>
<dbReference type="Proteomes" id="UP000006728">
    <property type="component" value="Chromosome"/>
</dbReference>
<dbReference type="GO" id="GO:1990904">
    <property type="term" value="C:ribonucleoprotein complex"/>
    <property type="evidence" value="ECO:0007669"/>
    <property type="project" value="UniProtKB-KW"/>
</dbReference>
<dbReference type="GO" id="GO:0005840">
    <property type="term" value="C:ribosome"/>
    <property type="evidence" value="ECO:0007669"/>
    <property type="project" value="UniProtKB-KW"/>
</dbReference>
<dbReference type="GO" id="GO:0019843">
    <property type="term" value="F:rRNA binding"/>
    <property type="evidence" value="ECO:0007669"/>
    <property type="project" value="UniProtKB-UniRule"/>
</dbReference>
<dbReference type="GO" id="GO:0003735">
    <property type="term" value="F:structural constituent of ribosome"/>
    <property type="evidence" value="ECO:0007669"/>
    <property type="project" value="InterPro"/>
</dbReference>
<dbReference type="GO" id="GO:0006412">
    <property type="term" value="P:translation"/>
    <property type="evidence" value="ECO:0007669"/>
    <property type="project" value="UniProtKB-UniRule"/>
</dbReference>
<dbReference type="FunFam" id="3.40.5.10:FF:000003">
    <property type="entry name" value="50S ribosomal protein L9"/>
    <property type="match status" value="1"/>
</dbReference>
<dbReference type="Gene3D" id="3.10.430.100">
    <property type="entry name" value="Ribosomal protein L9, C-terminal domain"/>
    <property type="match status" value="1"/>
</dbReference>
<dbReference type="Gene3D" id="3.40.5.10">
    <property type="entry name" value="Ribosomal protein L9, N-terminal domain"/>
    <property type="match status" value="1"/>
</dbReference>
<dbReference type="HAMAP" id="MF_00503">
    <property type="entry name" value="Ribosomal_bL9"/>
    <property type="match status" value="1"/>
</dbReference>
<dbReference type="InterPro" id="IPR000244">
    <property type="entry name" value="Ribosomal_bL9"/>
</dbReference>
<dbReference type="InterPro" id="IPR009027">
    <property type="entry name" value="Ribosomal_bL9/RNase_H1_N"/>
</dbReference>
<dbReference type="InterPro" id="IPR020594">
    <property type="entry name" value="Ribosomal_bL9_bac/chp"/>
</dbReference>
<dbReference type="InterPro" id="IPR020069">
    <property type="entry name" value="Ribosomal_bL9_C"/>
</dbReference>
<dbReference type="InterPro" id="IPR036791">
    <property type="entry name" value="Ribosomal_bL9_C_sf"/>
</dbReference>
<dbReference type="InterPro" id="IPR020070">
    <property type="entry name" value="Ribosomal_bL9_N"/>
</dbReference>
<dbReference type="InterPro" id="IPR036935">
    <property type="entry name" value="Ribosomal_bL9_N_sf"/>
</dbReference>
<dbReference type="NCBIfam" id="TIGR00158">
    <property type="entry name" value="L9"/>
    <property type="match status" value="1"/>
</dbReference>
<dbReference type="PANTHER" id="PTHR21368">
    <property type="entry name" value="50S RIBOSOMAL PROTEIN L9"/>
    <property type="match status" value="1"/>
</dbReference>
<dbReference type="Pfam" id="PF03948">
    <property type="entry name" value="Ribosomal_L9_C"/>
    <property type="match status" value="1"/>
</dbReference>
<dbReference type="Pfam" id="PF01281">
    <property type="entry name" value="Ribosomal_L9_N"/>
    <property type="match status" value="1"/>
</dbReference>
<dbReference type="SUPFAM" id="SSF55658">
    <property type="entry name" value="L9 N-domain-like"/>
    <property type="match status" value="1"/>
</dbReference>
<dbReference type="SUPFAM" id="SSF55653">
    <property type="entry name" value="Ribosomal protein L9 C-domain"/>
    <property type="match status" value="1"/>
</dbReference>
<dbReference type="PROSITE" id="PS00651">
    <property type="entry name" value="RIBOSOMAL_L9"/>
    <property type="match status" value="1"/>
</dbReference>
<organism>
    <name type="scientific">Saccharopolyspora erythraea (strain ATCC 11635 / DSM 40517 / JCM 4748 / NBRC 13426 / NCIMB 8594 / NRRL 2338)</name>
    <dbReference type="NCBI Taxonomy" id="405948"/>
    <lineage>
        <taxon>Bacteria</taxon>
        <taxon>Bacillati</taxon>
        <taxon>Actinomycetota</taxon>
        <taxon>Actinomycetes</taxon>
        <taxon>Pseudonocardiales</taxon>
        <taxon>Pseudonocardiaceae</taxon>
        <taxon>Saccharopolyspora</taxon>
    </lineage>
</organism>
<evidence type="ECO:0000255" key="1">
    <source>
        <dbReference type="HAMAP-Rule" id="MF_00503"/>
    </source>
</evidence>
<evidence type="ECO:0000305" key="2"/>
<name>RL9_SACEN</name>
<keyword id="KW-1185">Reference proteome</keyword>
<keyword id="KW-0687">Ribonucleoprotein</keyword>
<keyword id="KW-0689">Ribosomal protein</keyword>
<keyword id="KW-0694">RNA-binding</keyword>
<keyword id="KW-0699">rRNA-binding</keyword>